<protein>
    <recommendedName>
        <fullName evidence="1">Ribosome biogenesis protein BOP1 homolog</fullName>
    </recommendedName>
</protein>
<evidence type="ECO:0000255" key="1">
    <source>
        <dbReference type="HAMAP-Rule" id="MF_03027"/>
    </source>
</evidence>
<evidence type="ECO:0000256" key="2">
    <source>
        <dbReference type="SAM" id="MobiDB-lite"/>
    </source>
</evidence>
<proteinExistence type="inferred from homology"/>
<reference key="1">
    <citation type="journal article" date="2007" name="Nature">
        <title>Evolution of genes and genomes on the Drosophila phylogeny.</title>
        <authorList>
            <consortium name="Drosophila 12 genomes consortium"/>
        </authorList>
    </citation>
    <scope>NUCLEOTIDE SEQUENCE [LARGE SCALE GENOMIC DNA]</scope>
    <source>
        <strain>Tucson 14024-0371.13</strain>
    </source>
</reference>
<keyword id="KW-0539">Nucleus</keyword>
<keyword id="KW-1185">Reference proteome</keyword>
<keyword id="KW-0677">Repeat</keyword>
<keyword id="KW-0690">Ribosome biogenesis</keyword>
<keyword id="KW-0698">rRNA processing</keyword>
<keyword id="KW-0853">WD repeat</keyword>
<organism>
    <name type="scientific">Drosophila ananassae</name>
    <name type="common">Fruit fly</name>
    <dbReference type="NCBI Taxonomy" id="7217"/>
    <lineage>
        <taxon>Eukaryota</taxon>
        <taxon>Metazoa</taxon>
        <taxon>Ecdysozoa</taxon>
        <taxon>Arthropoda</taxon>
        <taxon>Hexapoda</taxon>
        <taxon>Insecta</taxon>
        <taxon>Pterygota</taxon>
        <taxon>Neoptera</taxon>
        <taxon>Endopterygota</taxon>
        <taxon>Diptera</taxon>
        <taxon>Brachycera</taxon>
        <taxon>Muscomorpha</taxon>
        <taxon>Ephydroidea</taxon>
        <taxon>Drosophilidae</taxon>
        <taxon>Drosophila</taxon>
        <taxon>Sophophora</taxon>
    </lineage>
</organism>
<feature type="chain" id="PRO_0000370394" description="Ribosome biogenesis protein BOP1 homolog">
    <location>
        <begin position="1"/>
        <end position="793"/>
    </location>
</feature>
<feature type="repeat" description="WD 1">
    <location>
        <begin position="454"/>
        <end position="495"/>
    </location>
</feature>
<feature type="repeat" description="WD 2">
    <location>
        <begin position="497"/>
        <end position="535"/>
    </location>
</feature>
<feature type="repeat" description="WD 3">
    <location>
        <begin position="579"/>
        <end position="621"/>
    </location>
</feature>
<feature type="repeat" description="WD 4">
    <location>
        <begin position="624"/>
        <end position="662"/>
    </location>
</feature>
<feature type="repeat" description="WD 5">
    <location>
        <begin position="665"/>
        <end position="704"/>
    </location>
</feature>
<feature type="repeat" description="WD 6">
    <location>
        <begin position="708"/>
        <end position="747"/>
    </location>
</feature>
<feature type="repeat" description="WD 7">
    <location>
        <begin position="763"/>
        <end position="793"/>
    </location>
</feature>
<feature type="region of interest" description="Disordered" evidence="2">
    <location>
        <begin position="1"/>
        <end position="168"/>
    </location>
</feature>
<feature type="compositionally biased region" description="Basic residues" evidence="2">
    <location>
        <begin position="1"/>
        <end position="11"/>
    </location>
</feature>
<feature type="compositionally biased region" description="Acidic residues" evidence="2">
    <location>
        <begin position="44"/>
        <end position="53"/>
    </location>
</feature>
<feature type="compositionally biased region" description="Acidic residues" evidence="2">
    <location>
        <begin position="60"/>
        <end position="72"/>
    </location>
</feature>
<feature type="compositionally biased region" description="Acidic residues" evidence="2">
    <location>
        <begin position="83"/>
        <end position="116"/>
    </location>
</feature>
<feature type="compositionally biased region" description="Basic and acidic residues" evidence="2">
    <location>
        <begin position="117"/>
        <end position="129"/>
    </location>
</feature>
<feature type="compositionally biased region" description="Polar residues" evidence="2">
    <location>
        <begin position="133"/>
        <end position="143"/>
    </location>
</feature>
<feature type="compositionally biased region" description="Basic and acidic residues" evidence="2">
    <location>
        <begin position="146"/>
        <end position="161"/>
    </location>
</feature>
<sequence length="793" mass="91340">MTKKLTLKRKGKEPEPTNEVAASSEASDNEEEEDLLQAVKDPGEDTTDDEGIDQEYQSDSSEDLEFESDEEGNYLGRKKGDGSSEEEDDDGDEEGEEEDEEEDDSEDGESADDGDEEKPTTSKQNKSEDEPSSSKVSKKTQPPTKDLVKRDPSHPEYHDSDTSDEEDIRNTVGNIPMHWYDEYKHIGYDWDAKKIVKPPQGDQIDEFLRKIEDPNFWRTVKDPQTGQEVLITDEDIALIKRIISGRIPNKDHNEYEPWVEWFTSEVEKMPIKNVPDHKRSFLPSVSEKKRVGRMVHALKMGWMKTTEEVEREKQAKRGPKFYMLWETDTSREHMRRIHDPVSAPKRDLPGHAESYNPPPEYLFDERETKEWLKLKDEPHKRKLHFMPQKFTSLRAVPAYSRYLRERFLRCLDLYLCPRAKRVKLNIDAEYLIPKLPSPRDLQPFPTIESLVYRGHTDLVRSVSVEPKGEYIVSGSDDKTVKIWEIATGRCIRTIETEDVVRCVAWCPNAKLSIIAVATGNRLLLINPKVGDKVLVKKTDDLLAEEPSSDVIESERIKAAVQWATAEPAEQEKGVRVVINHFKPIRQVTWHGRGDYLATVMPEGANRSALIHQLSKRRSQIPFSKSKGLIQCVLFHPVKPCFFVATQHNIRIYDLVKQELVKKLLTNSKWISGMSIHPKGDNLLVSTYDKKMLWFDLDLSTKPYQTMRLHRNAVRSVAFHLRYPLFASGSDDQAVIVSHGMVYNDLLQNPLIVPLKKLQTHEKREDFGVLDVNWHPIQPWIFSTGADCTIRLYT</sequence>
<name>BOP1_DROAN</name>
<accession>B3MHX6</accession>
<comment type="function">
    <text evidence="1">Required for maturation of ribosomal RNAs and formation of the large ribosomal subunit.</text>
</comment>
<comment type="subcellular location">
    <subcellularLocation>
        <location evidence="1">Nucleus</location>
        <location evidence="1">Nucleolus</location>
    </subcellularLocation>
    <subcellularLocation>
        <location evidence="1">Nucleus</location>
        <location evidence="1">Nucleoplasm</location>
    </subcellularLocation>
</comment>
<comment type="similarity">
    <text evidence="1">Belongs to the WD repeat BOP1/ERB1 family.</text>
</comment>
<dbReference type="EMBL" id="CH902619">
    <property type="protein sequence ID" value="EDV36963.1"/>
    <property type="molecule type" value="Genomic_DNA"/>
</dbReference>
<dbReference type="SMR" id="B3MHX6"/>
<dbReference type="FunCoup" id="B3MHX6">
    <property type="interactions" value="1331"/>
</dbReference>
<dbReference type="STRING" id="7217.B3MHX6"/>
<dbReference type="EnsemblMetazoa" id="FBtr0116375">
    <property type="protein sequence ID" value="FBpp0114867"/>
    <property type="gene ID" value="FBgn0088715"/>
</dbReference>
<dbReference type="EnsemblMetazoa" id="XM_001960105.4">
    <property type="protein sequence ID" value="XP_001960141.1"/>
    <property type="gene ID" value="LOC6494539"/>
</dbReference>
<dbReference type="GeneID" id="6494539"/>
<dbReference type="KEGG" id="dan:6494539"/>
<dbReference type="eggNOG" id="KOG0650">
    <property type="taxonomic scope" value="Eukaryota"/>
</dbReference>
<dbReference type="HOGENOM" id="CLU_011390_2_0_1"/>
<dbReference type="InParanoid" id="B3MHX6"/>
<dbReference type="OMA" id="MRPAKGE"/>
<dbReference type="OrthoDB" id="5571054at2759"/>
<dbReference type="PhylomeDB" id="B3MHX6"/>
<dbReference type="Proteomes" id="UP000007801">
    <property type="component" value="Unassembled WGS sequence"/>
</dbReference>
<dbReference type="GO" id="GO:0005654">
    <property type="term" value="C:nucleoplasm"/>
    <property type="evidence" value="ECO:0007669"/>
    <property type="project" value="UniProtKB-SubCell"/>
</dbReference>
<dbReference type="GO" id="GO:0070545">
    <property type="term" value="C:PeBoW complex"/>
    <property type="evidence" value="ECO:0007669"/>
    <property type="project" value="TreeGrafter"/>
</dbReference>
<dbReference type="GO" id="GO:0030687">
    <property type="term" value="C:preribosome, large subunit precursor"/>
    <property type="evidence" value="ECO:0007669"/>
    <property type="project" value="UniProtKB-UniRule"/>
</dbReference>
<dbReference type="GO" id="GO:0043021">
    <property type="term" value="F:ribonucleoprotein complex binding"/>
    <property type="evidence" value="ECO:0007669"/>
    <property type="project" value="UniProtKB-UniRule"/>
</dbReference>
<dbReference type="GO" id="GO:0000466">
    <property type="term" value="P:maturation of 5.8S rRNA from tricistronic rRNA transcript (SSU-rRNA, 5.8S rRNA, LSU-rRNA)"/>
    <property type="evidence" value="ECO:0007669"/>
    <property type="project" value="UniProtKB-UniRule"/>
</dbReference>
<dbReference type="GO" id="GO:0000463">
    <property type="term" value="P:maturation of LSU-rRNA from tricistronic rRNA transcript (SSU-rRNA, 5.8S rRNA, LSU-rRNA)"/>
    <property type="evidence" value="ECO:0007669"/>
    <property type="project" value="UniProtKB-UniRule"/>
</dbReference>
<dbReference type="GO" id="GO:0035206">
    <property type="term" value="P:regulation of hemocyte proliferation"/>
    <property type="evidence" value="ECO:0007669"/>
    <property type="project" value="EnsemblMetazoa"/>
</dbReference>
<dbReference type="CDD" id="cd00200">
    <property type="entry name" value="WD40"/>
    <property type="match status" value="1"/>
</dbReference>
<dbReference type="FunFam" id="2.130.10.10:FF:000061">
    <property type="entry name" value="Ribosome biogenesis protein BOP1 homolog"/>
    <property type="match status" value="1"/>
</dbReference>
<dbReference type="Gene3D" id="2.130.10.10">
    <property type="entry name" value="YVTN repeat-like/Quinoprotein amine dehydrogenase"/>
    <property type="match status" value="1"/>
</dbReference>
<dbReference type="HAMAP" id="MF_03027">
    <property type="entry name" value="BOP1"/>
    <property type="match status" value="1"/>
</dbReference>
<dbReference type="InterPro" id="IPR028598">
    <property type="entry name" value="BOP1/Erb1"/>
</dbReference>
<dbReference type="InterPro" id="IPR012953">
    <property type="entry name" value="BOP1_N_dom"/>
</dbReference>
<dbReference type="InterPro" id="IPR015943">
    <property type="entry name" value="WD40/YVTN_repeat-like_dom_sf"/>
</dbReference>
<dbReference type="InterPro" id="IPR019775">
    <property type="entry name" value="WD40_repeat_CS"/>
</dbReference>
<dbReference type="InterPro" id="IPR036322">
    <property type="entry name" value="WD40_repeat_dom_sf"/>
</dbReference>
<dbReference type="InterPro" id="IPR001680">
    <property type="entry name" value="WD40_rpt"/>
</dbReference>
<dbReference type="PANTHER" id="PTHR17605:SF0">
    <property type="entry name" value="RIBOSOME BIOGENESIS PROTEIN BOP1"/>
    <property type="match status" value="1"/>
</dbReference>
<dbReference type="PANTHER" id="PTHR17605">
    <property type="entry name" value="RIBOSOME BIOGENESIS PROTEIN BOP1 BLOCK OF PROLIFERATION 1 PROTEIN"/>
    <property type="match status" value="1"/>
</dbReference>
<dbReference type="Pfam" id="PF08145">
    <property type="entry name" value="BOP1NT"/>
    <property type="match status" value="1"/>
</dbReference>
<dbReference type="Pfam" id="PF00400">
    <property type="entry name" value="WD40"/>
    <property type="match status" value="3"/>
</dbReference>
<dbReference type="SMART" id="SM01035">
    <property type="entry name" value="BOP1NT"/>
    <property type="match status" value="1"/>
</dbReference>
<dbReference type="SMART" id="SM00320">
    <property type="entry name" value="WD40"/>
    <property type="match status" value="7"/>
</dbReference>
<dbReference type="SUPFAM" id="SSF50978">
    <property type="entry name" value="WD40 repeat-like"/>
    <property type="match status" value="1"/>
</dbReference>
<dbReference type="PROSITE" id="PS00678">
    <property type="entry name" value="WD_REPEATS_1"/>
    <property type="match status" value="1"/>
</dbReference>
<dbReference type="PROSITE" id="PS50082">
    <property type="entry name" value="WD_REPEATS_2"/>
    <property type="match status" value="1"/>
</dbReference>
<dbReference type="PROSITE" id="PS50294">
    <property type="entry name" value="WD_REPEATS_REGION"/>
    <property type="match status" value="2"/>
</dbReference>
<gene>
    <name type="ORF">GF11675</name>
</gene>